<evidence type="ECO:0000255" key="1">
    <source>
        <dbReference type="HAMAP-Rule" id="MF_01114"/>
    </source>
</evidence>
<gene>
    <name evidence="1" type="primary">recX</name>
    <name type="ordered locus">XOO2792</name>
</gene>
<dbReference type="EMBL" id="AP008229">
    <property type="protein sequence ID" value="BAE69547.1"/>
    <property type="molecule type" value="Genomic_DNA"/>
</dbReference>
<dbReference type="RefSeq" id="WP_011408883.1">
    <property type="nucleotide sequence ID" value="NC_007705.1"/>
</dbReference>
<dbReference type="SMR" id="Q2P1N0"/>
<dbReference type="KEGG" id="xom:XOO2792"/>
<dbReference type="HOGENOM" id="CLU_066607_3_2_6"/>
<dbReference type="GO" id="GO:0005737">
    <property type="term" value="C:cytoplasm"/>
    <property type="evidence" value="ECO:0007669"/>
    <property type="project" value="UniProtKB-SubCell"/>
</dbReference>
<dbReference type="GO" id="GO:0006282">
    <property type="term" value="P:regulation of DNA repair"/>
    <property type="evidence" value="ECO:0007669"/>
    <property type="project" value="UniProtKB-UniRule"/>
</dbReference>
<dbReference type="Gene3D" id="1.10.10.10">
    <property type="entry name" value="Winged helix-like DNA-binding domain superfamily/Winged helix DNA-binding domain"/>
    <property type="match status" value="3"/>
</dbReference>
<dbReference type="HAMAP" id="MF_01114">
    <property type="entry name" value="RecX"/>
    <property type="match status" value="1"/>
</dbReference>
<dbReference type="InterPro" id="IPR053926">
    <property type="entry name" value="RecX_HTH_1st"/>
</dbReference>
<dbReference type="InterPro" id="IPR053924">
    <property type="entry name" value="RecX_HTH_2nd"/>
</dbReference>
<dbReference type="InterPro" id="IPR053925">
    <property type="entry name" value="RecX_HTH_3rd"/>
</dbReference>
<dbReference type="InterPro" id="IPR003783">
    <property type="entry name" value="Regulatory_RecX"/>
</dbReference>
<dbReference type="InterPro" id="IPR036388">
    <property type="entry name" value="WH-like_DNA-bd_sf"/>
</dbReference>
<dbReference type="NCBIfam" id="NF001054">
    <property type="entry name" value="PRK00117.2-1"/>
    <property type="match status" value="1"/>
</dbReference>
<dbReference type="PANTHER" id="PTHR33602">
    <property type="entry name" value="REGULATORY PROTEIN RECX FAMILY PROTEIN"/>
    <property type="match status" value="1"/>
</dbReference>
<dbReference type="PANTHER" id="PTHR33602:SF1">
    <property type="entry name" value="REGULATORY PROTEIN RECX FAMILY PROTEIN"/>
    <property type="match status" value="1"/>
</dbReference>
<dbReference type="Pfam" id="PF21982">
    <property type="entry name" value="RecX_HTH1"/>
    <property type="match status" value="1"/>
</dbReference>
<dbReference type="Pfam" id="PF02631">
    <property type="entry name" value="RecX_HTH2"/>
    <property type="match status" value="1"/>
</dbReference>
<dbReference type="Pfam" id="PF21981">
    <property type="entry name" value="RecX_HTH3"/>
    <property type="match status" value="1"/>
</dbReference>
<reference key="1">
    <citation type="journal article" date="2005" name="Jpn. Agric. Res. Q.">
        <title>Genome sequence of Xanthomonas oryzae pv. oryzae suggests contribution of large numbers of effector genes and insertion sequences to its race diversity.</title>
        <authorList>
            <person name="Ochiai H."/>
            <person name="Inoue Y."/>
            <person name="Takeya M."/>
            <person name="Sasaki A."/>
            <person name="Kaku H."/>
        </authorList>
    </citation>
    <scope>NUCLEOTIDE SEQUENCE [LARGE SCALE GENOMIC DNA]</scope>
    <source>
        <strain>MAFF 311018</strain>
    </source>
</reference>
<accession>Q2P1N0</accession>
<proteinExistence type="inferred from homology"/>
<keyword id="KW-0963">Cytoplasm</keyword>
<feature type="chain" id="PRO_1000065231" description="Regulatory protein RecX">
    <location>
        <begin position="1"/>
        <end position="160"/>
    </location>
</feature>
<organism>
    <name type="scientific">Xanthomonas oryzae pv. oryzae (strain MAFF 311018)</name>
    <dbReference type="NCBI Taxonomy" id="342109"/>
    <lineage>
        <taxon>Bacteria</taxon>
        <taxon>Pseudomonadati</taxon>
        <taxon>Pseudomonadota</taxon>
        <taxon>Gammaproteobacteria</taxon>
        <taxon>Lysobacterales</taxon>
        <taxon>Lysobacteraceae</taxon>
        <taxon>Xanthomonas</taxon>
    </lineage>
</organism>
<name>RECX_XANOM</name>
<sequence length="160" mass="17904">MNEQEPAPKRGRRFKEQTPVQRALGLLVRREHSRKELNRKLLARGIEPDAAQAAVDRLTGEGWQDDARFAAAVVRNRAGSGYGPLHIRAELGTHGLDSEAISAAMATFQGDWTENARDLIHRRFGEQGPIDLPQRRKAADWLARRGFDGNSIRAATRFDP</sequence>
<comment type="function">
    <text evidence="1">Modulates RecA activity.</text>
</comment>
<comment type="subcellular location">
    <subcellularLocation>
        <location evidence="1">Cytoplasm</location>
    </subcellularLocation>
</comment>
<comment type="similarity">
    <text evidence="1">Belongs to the RecX family.</text>
</comment>
<protein>
    <recommendedName>
        <fullName evidence="1">Regulatory protein RecX</fullName>
    </recommendedName>
</protein>